<sequence length="256" mass="28297">MVLLHHVSLSHYQNSSSLFSSSSESILCLFLVLCVMQLEQGMRPISRCYNPTAYSTTMGRSFFAGAATSSKLFSRGFSVTKPKSKTESKEVAAKKHSDAERRRRLRINSQFATLRTILPNLVKQDKASVLGETVRYFNELKKMVQDIPTTPSLEDNLRLDHCNNNRDLARVVFSCSDREGLMSEVAESMKAVKAKAVRAEIMTVGGRTKCALFVQGVNGNEGLVKLKKSLKLVVNGKSSSEAKNNNNGGSLLIQQQ</sequence>
<organism>
    <name type="scientific">Arabidopsis thaliana</name>
    <name type="common">Mouse-ear cress</name>
    <dbReference type="NCBI Taxonomy" id="3702"/>
    <lineage>
        <taxon>Eukaryota</taxon>
        <taxon>Viridiplantae</taxon>
        <taxon>Streptophyta</taxon>
        <taxon>Embryophyta</taxon>
        <taxon>Tracheophyta</taxon>
        <taxon>Spermatophyta</taxon>
        <taxon>Magnoliopsida</taxon>
        <taxon>eudicotyledons</taxon>
        <taxon>Gunneridae</taxon>
        <taxon>Pentapetalae</taxon>
        <taxon>rosids</taxon>
        <taxon>malvids</taxon>
        <taxon>Brassicales</taxon>
        <taxon>Brassicaceae</taxon>
        <taxon>Camelineae</taxon>
        <taxon>Arabidopsis</taxon>
    </lineage>
</organism>
<protein>
    <recommendedName>
        <fullName>Transcription factor bHLH131</fullName>
    </recommendedName>
    <alternativeName>
        <fullName>Basic helix-loop-helix protein 131</fullName>
        <shortName>AtbHLH131</shortName>
        <shortName>bHLH 131</shortName>
    </alternativeName>
    <alternativeName>
        <fullName>bHLH transcription factor bHLH131</fullName>
    </alternativeName>
</protein>
<gene>
    <name type="primary">BHLH131</name>
    <name type="ordered locus">At4g38070</name>
    <name type="ORF">F20D10.190</name>
</gene>
<dbReference type="EMBL" id="AJ577587">
    <property type="protein sequence ID" value="CAE12174.1"/>
    <property type="molecule type" value="mRNA"/>
</dbReference>
<dbReference type="EMBL" id="AL035538">
    <property type="protein sequence ID" value="CAB37547.1"/>
    <property type="status" value="ALT_SEQ"/>
    <property type="molecule type" value="Genomic_DNA"/>
</dbReference>
<dbReference type="EMBL" id="AL161592">
    <property type="protein sequence ID" value="CAB80472.1"/>
    <property type="status" value="ALT_SEQ"/>
    <property type="molecule type" value="Genomic_DNA"/>
</dbReference>
<dbReference type="EMBL" id="CP002687">
    <property type="protein sequence ID" value="AEE86871.2"/>
    <property type="molecule type" value="Genomic_DNA"/>
</dbReference>
<dbReference type="PIR" id="T05634">
    <property type="entry name" value="T05634"/>
</dbReference>
<dbReference type="RefSeq" id="NP_001320156.1">
    <property type="nucleotide sequence ID" value="NM_001342476.1"/>
</dbReference>
<dbReference type="SMR" id="P0CB25"/>
<dbReference type="FunCoup" id="P0CB25">
    <property type="interactions" value="84"/>
</dbReference>
<dbReference type="STRING" id="3702.P0CB25"/>
<dbReference type="EnsemblPlants" id="AT4G38070.1">
    <property type="protein sequence ID" value="AT4G38070.1"/>
    <property type="gene ID" value="AT4G38070"/>
</dbReference>
<dbReference type="GeneID" id="829963"/>
<dbReference type="Gramene" id="AT4G38070.1">
    <property type="protein sequence ID" value="AT4G38070.1"/>
    <property type="gene ID" value="AT4G38070"/>
</dbReference>
<dbReference type="KEGG" id="ath:AT4G38070"/>
<dbReference type="Araport" id="AT4G38070"/>
<dbReference type="TAIR" id="AT4G38070"/>
<dbReference type="HOGENOM" id="CLU_248108_0_0_1"/>
<dbReference type="InParanoid" id="P0CB25"/>
<dbReference type="OMA" id="LRINCQF"/>
<dbReference type="PhylomeDB" id="P0CB25"/>
<dbReference type="PRO" id="PR:P0CB25"/>
<dbReference type="Proteomes" id="UP000006548">
    <property type="component" value="Chromosome 4"/>
</dbReference>
<dbReference type="ExpressionAtlas" id="P0CB25">
    <property type="expression patterns" value="baseline and differential"/>
</dbReference>
<dbReference type="GO" id="GO:0005634">
    <property type="term" value="C:nucleus"/>
    <property type="evidence" value="ECO:0007669"/>
    <property type="project" value="UniProtKB-SubCell"/>
</dbReference>
<dbReference type="GO" id="GO:0003677">
    <property type="term" value="F:DNA binding"/>
    <property type="evidence" value="ECO:0007669"/>
    <property type="project" value="UniProtKB-KW"/>
</dbReference>
<dbReference type="GO" id="GO:0003700">
    <property type="term" value="F:DNA-binding transcription factor activity"/>
    <property type="evidence" value="ECO:0007669"/>
    <property type="project" value="InterPro"/>
</dbReference>
<dbReference type="GO" id="GO:0046983">
    <property type="term" value="F:protein dimerization activity"/>
    <property type="evidence" value="ECO:0007669"/>
    <property type="project" value="InterPro"/>
</dbReference>
<dbReference type="CDD" id="cd11455">
    <property type="entry name" value="bHLH_AtAIG1_like"/>
    <property type="match status" value="1"/>
</dbReference>
<dbReference type="Gene3D" id="4.10.280.10">
    <property type="entry name" value="Helix-loop-helix DNA-binding domain"/>
    <property type="match status" value="1"/>
</dbReference>
<dbReference type="InterPro" id="IPR045847">
    <property type="entry name" value="AIG1-like"/>
</dbReference>
<dbReference type="InterPro" id="IPR011598">
    <property type="entry name" value="bHLH_dom"/>
</dbReference>
<dbReference type="InterPro" id="IPR036638">
    <property type="entry name" value="HLH_DNA-bd_sf"/>
</dbReference>
<dbReference type="PANTHER" id="PTHR45844:SF17">
    <property type="entry name" value="TRANSCRIPTION FACTOR BHLH131"/>
    <property type="match status" value="1"/>
</dbReference>
<dbReference type="PANTHER" id="PTHR45844">
    <property type="entry name" value="TRANSCRIPTION FACTOR BHLH30"/>
    <property type="match status" value="1"/>
</dbReference>
<dbReference type="Pfam" id="PF00010">
    <property type="entry name" value="HLH"/>
    <property type="match status" value="1"/>
</dbReference>
<dbReference type="SMART" id="SM00353">
    <property type="entry name" value="HLH"/>
    <property type="match status" value="1"/>
</dbReference>
<dbReference type="SUPFAM" id="SSF47459">
    <property type="entry name" value="HLH, helix-loop-helix DNA-binding domain"/>
    <property type="match status" value="1"/>
</dbReference>
<dbReference type="PROSITE" id="PS50888">
    <property type="entry name" value="BHLH"/>
    <property type="match status" value="1"/>
</dbReference>
<keyword id="KW-0238">DNA-binding</keyword>
<keyword id="KW-0539">Nucleus</keyword>
<keyword id="KW-1185">Reference proteome</keyword>
<keyword id="KW-0804">Transcription</keyword>
<keyword id="KW-0805">Transcription regulation</keyword>
<feature type="chain" id="PRO_0000358815" description="Transcription factor bHLH131">
    <location>
        <begin position="1"/>
        <end position="256"/>
    </location>
</feature>
<feature type="domain" description="bHLH" evidence="1">
    <location>
        <begin position="91"/>
        <end position="140"/>
    </location>
</feature>
<name>BH131_ARATH</name>
<reference key="1">
    <citation type="journal article" date="2003" name="Mol. Biol. Evol.">
        <title>The basic helix-loop-helix transcription factor family in plants: a genome-wide study of protein structure and functional diversity.</title>
        <authorList>
            <person name="Heim M.A."/>
            <person name="Jakoby M."/>
            <person name="Werber M."/>
            <person name="Martin C."/>
            <person name="Weisshaar B."/>
            <person name="Bailey P.C."/>
        </authorList>
    </citation>
    <scope>NUCLEOTIDE SEQUENCE [MRNA]</scope>
    <scope>GENE FAMILY</scope>
    <scope>NOMENCLATURE</scope>
    <source>
        <strain>cv. Columbia</strain>
    </source>
</reference>
<reference key="2">
    <citation type="journal article" date="1999" name="Nature">
        <title>Sequence and analysis of chromosome 4 of the plant Arabidopsis thaliana.</title>
        <authorList>
            <person name="Mayer K.F.X."/>
            <person name="Schueller C."/>
            <person name="Wambutt R."/>
            <person name="Murphy G."/>
            <person name="Volckaert G."/>
            <person name="Pohl T."/>
            <person name="Duesterhoeft A."/>
            <person name="Stiekema W."/>
            <person name="Entian K.-D."/>
            <person name="Terryn N."/>
            <person name="Harris B."/>
            <person name="Ansorge W."/>
            <person name="Brandt P."/>
            <person name="Grivell L.A."/>
            <person name="Rieger M."/>
            <person name="Weichselgartner M."/>
            <person name="de Simone V."/>
            <person name="Obermaier B."/>
            <person name="Mache R."/>
            <person name="Mueller M."/>
            <person name="Kreis M."/>
            <person name="Delseny M."/>
            <person name="Puigdomenech P."/>
            <person name="Watson M."/>
            <person name="Schmidtheini T."/>
            <person name="Reichert B."/>
            <person name="Portetelle D."/>
            <person name="Perez-Alonso M."/>
            <person name="Boutry M."/>
            <person name="Bancroft I."/>
            <person name="Vos P."/>
            <person name="Hoheisel J."/>
            <person name="Zimmermann W."/>
            <person name="Wedler H."/>
            <person name="Ridley P."/>
            <person name="Langham S.-A."/>
            <person name="McCullagh B."/>
            <person name="Bilham L."/>
            <person name="Robben J."/>
            <person name="van der Schueren J."/>
            <person name="Grymonprez B."/>
            <person name="Chuang Y.-J."/>
            <person name="Vandenbussche F."/>
            <person name="Braeken M."/>
            <person name="Weltjens I."/>
            <person name="Voet M."/>
            <person name="Bastiaens I."/>
            <person name="Aert R."/>
            <person name="Defoor E."/>
            <person name="Weitzenegger T."/>
            <person name="Bothe G."/>
            <person name="Ramsperger U."/>
            <person name="Hilbert H."/>
            <person name="Braun M."/>
            <person name="Holzer E."/>
            <person name="Brandt A."/>
            <person name="Peters S."/>
            <person name="van Staveren M."/>
            <person name="Dirkse W."/>
            <person name="Mooijman P."/>
            <person name="Klein Lankhorst R."/>
            <person name="Rose M."/>
            <person name="Hauf J."/>
            <person name="Koetter P."/>
            <person name="Berneiser S."/>
            <person name="Hempel S."/>
            <person name="Feldpausch M."/>
            <person name="Lamberth S."/>
            <person name="Van den Daele H."/>
            <person name="De Keyser A."/>
            <person name="Buysshaert C."/>
            <person name="Gielen J."/>
            <person name="Villarroel R."/>
            <person name="De Clercq R."/>
            <person name="van Montagu M."/>
            <person name="Rogers J."/>
            <person name="Cronin A."/>
            <person name="Quail M.A."/>
            <person name="Bray-Allen S."/>
            <person name="Clark L."/>
            <person name="Doggett J."/>
            <person name="Hall S."/>
            <person name="Kay M."/>
            <person name="Lennard N."/>
            <person name="McLay K."/>
            <person name="Mayes R."/>
            <person name="Pettett A."/>
            <person name="Rajandream M.A."/>
            <person name="Lyne M."/>
            <person name="Benes V."/>
            <person name="Rechmann S."/>
            <person name="Borkova D."/>
            <person name="Bloecker H."/>
            <person name="Scharfe M."/>
            <person name="Grimm M."/>
            <person name="Loehnert T.-H."/>
            <person name="Dose S."/>
            <person name="de Haan M."/>
            <person name="Maarse A.C."/>
            <person name="Schaefer M."/>
            <person name="Mueller-Auer S."/>
            <person name="Gabel C."/>
            <person name="Fuchs M."/>
            <person name="Fartmann B."/>
            <person name="Granderath K."/>
            <person name="Dauner D."/>
            <person name="Herzl A."/>
            <person name="Neumann S."/>
            <person name="Argiriou A."/>
            <person name="Vitale D."/>
            <person name="Liguori R."/>
            <person name="Piravandi E."/>
            <person name="Massenet O."/>
            <person name="Quigley F."/>
            <person name="Clabauld G."/>
            <person name="Muendlein A."/>
            <person name="Felber R."/>
            <person name="Schnabl S."/>
            <person name="Hiller R."/>
            <person name="Schmidt W."/>
            <person name="Lecharny A."/>
            <person name="Aubourg S."/>
            <person name="Chefdor F."/>
            <person name="Cooke R."/>
            <person name="Berger C."/>
            <person name="Monfort A."/>
            <person name="Casacuberta E."/>
            <person name="Gibbons T."/>
            <person name="Weber N."/>
            <person name="Vandenbol M."/>
            <person name="Bargues M."/>
            <person name="Terol J."/>
            <person name="Torres A."/>
            <person name="Perez-Perez A."/>
            <person name="Purnelle B."/>
            <person name="Bent E."/>
            <person name="Johnson S."/>
            <person name="Tacon D."/>
            <person name="Jesse T."/>
            <person name="Heijnen L."/>
            <person name="Schwarz S."/>
            <person name="Scholler P."/>
            <person name="Heber S."/>
            <person name="Francs P."/>
            <person name="Bielke C."/>
            <person name="Frishman D."/>
            <person name="Haase D."/>
            <person name="Lemcke K."/>
            <person name="Mewes H.-W."/>
            <person name="Stocker S."/>
            <person name="Zaccaria P."/>
            <person name="Bevan M."/>
            <person name="Wilson R.K."/>
            <person name="de la Bastide M."/>
            <person name="Habermann K."/>
            <person name="Parnell L."/>
            <person name="Dedhia N."/>
            <person name="Gnoj L."/>
            <person name="Schutz K."/>
            <person name="Huang E."/>
            <person name="Spiegel L."/>
            <person name="Sekhon M."/>
            <person name="Murray J."/>
            <person name="Sheet P."/>
            <person name="Cordes M."/>
            <person name="Abu-Threideh J."/>
            <person name="Stoneking T."/>
            <person name="Kalicki J."/>
            <person name="Graves T."/>
            <person name="Harmon G."/>
            <person name="Edwards J."/>
            <person name="Latreille P."/>
            <person name="Courtney L."/>
            <person name="Cloud J."/>
            <person name="Abbott A."/>
            <person name="Scott K."/>
            <person name="Johnson D."/>
            <person name="Minx P."/>
            <person name="Bentley D."/>
            <person name="Fulton B."/>
            <person name="Miller N."/>
            <person name="Greco T."/>
            <person name="Kemp K."/>
            <person name="Kramer J."/>
            <person name="Fulton L."/>
            <person name="Mardis E."/>
            <person name="Dante M."/>
            <person name="Pepin K."/>
            <person name="Hillier L.W."/>
            <person name="Nelson J."/>
            <person name="Spieth J."/>
            <person name="Ryan E."/>
            <person name="Andrews S."/>
            <person name="Geisel C."/>
            <person name="Layman D."/>
            <person name="Du H."/>
            <person name="Ali J."/>
            <person name="Berghoff A."/>
            <person name="Jones K."/>
            <person name="Drone K."/>
            <person name="Cotton M."/>
            <person name="Joshu C."/>
            <person name="Antonoiu B."/>
            <person name="Zidanic M."/>
            <person name="Strong C."/>
            <person name="Sun H."/>
            <person name="Lamar B."/>
            <person name="Yordan C."/>
            <person name="Ma P."/>
            <person name="Zhong J."/>
            <person name="Preston R."/>
            <person name="Vil D."/>
            <person name="Shekher M."/>
            <person name="Matero A."/>
            <person name="Shah R."/>
            <person name="Swaby I.K."/>
            <person name="O'Shaughnessy A."/>
            <person name="Rodriguez M."/>
            <person name="Hoffman J."/>
            <person name="Till S."/>
            <person name="Granat S."/>
            <person name="Shohdy N."/>
            <person name="Hasegawa A."/>
            <person name="Hameed A."/>
            <person name="Lodhi M."/>
            <person name="Johnson A."/>
            <person name="Chen E."/>
            <person name="Marra M.A."/>
            <person name="Martienssen R."/>
            <person name="McCombie W.R."/>
        </authorList>
    </citation>
    <scope>NUCLEOTIDE SEQUENCE [LARGE SCALE GENOMIC DNA]</scope>
    <source>
        <strain>cv. Columbia</strain>
    </source>
</reference>
<reference key="3">
    <citation type="journal article" date="2017" name="Plant J.">
        <title>Araport11: a complete reannotation of the Arabidopsis thaliana reference genome.</title>
        <authorList>
            <person name="Cheng C.Y."/>
            <person name="Krishnakumar V."/>
            <person name="Chan A.P."/>
            <person name="Thibaud-Nissen F."/>
            <person name="Schobel S."/>
            <person name="Town C.D."/>
        </authorList>
    </citation>
    <scope>GENOME REANNOTATION</scope>
    <source>
        <strain>cv. Columbia</strain>
    </source>
</reference>
<reference key="4">
    <citation type="journal article" date="2003" name="Plant Cell">
        <title>Update on the basic helix-loop-helix transcription factor gene family in Arabidopsis thaliana.</title>
        <authorList>
            <person name="Bailey P.C."/>
            <person name="Martin C."/>
            <person name="Toledo-Ortiz G."/>
            <person name="Quail P.H."/>
            <person name="Huq E."/>
            <person name="Heim M.A."/>
            <person name="Jakoby M."/>
            <person name="Werber M."/>
            <person name="Weisshaar B."/>
        </authorList>
    </citation>
    <scope>GENE FAMILY</scope>
    <scope>NOMENCLATURE</scope>
</reference>
<evidence type="ECO:0000255" key="1">
    <source>
        <dbReference type="PROSITE-ProRule" id="PRU00981"/>
    </source>
</evidence>
<evidence type="ECO:0000305" key="2"/>
<proteinExistence type="evidence at transcript level"/>
<comment type="subunit">
    <text evidence="2">Homodimer.</text>
</comment>
<comment type="subcellular location">
    <subcellularLocation>
        <location evidence="1">Nucleus</location>
    </subcellularLocation>
</comment>
<comment type="sequence caution" evidence="2">
    <conflict type="erroneous gene model prediction">
        <sequence resource="EMBL-CDS" id="CAB37547"/>
    </conflict>
    <text>The predicted gene has been split into 3 genes: At4g38062, At4g38065 and At4g38070.</text>
</comment>
<comment type="sequence caution" evidence="2">
    <conflict type="erroneous gene model prediction">
        <sequence resource="EMBL-CDS" id="CAB80472"/>
    </conflict>
    <text>The predicted gene has been split into 3 genes: At4g38062, At4g38065 and At4g38070.</text>
</comment>
<accession>P0CB25</accession>
<accession>F4JSX4</accession>
<accession>Q7XHI6</accession>
<accession>Q9SZK7</accession>